<reference key="1">
    <citation type="journal article" date="2002" name="Proc. Natl. Acad. Sci. U.S.A.">
        <title>The genome sequence of the facultative intracellular pathogen Brucella melitensis.</title>
        <authorList>
            <person name="DelVecchio V.G."/>
            <person name="Kapatral V."/>
            <person name="Redkar R.J."/>
            <person name="Patra G."/>
            <person name="Mujer C."/>
            <person name="Los T."/>
            <person name="Ivanova N."/>
            <person name="Anderson I."/>
            <person name="Bhattacharyya A."/>
            <person name="Lykidis A."/>
            <person name="Reznik G."/>
            <person name="Jablonski L."/>
            <person name="Larsen N."/>
            <person name="D'Souza M."/>
            <person name="Bernal A."/>
            <person name="Mazur M."/>
            <person name="Goltsman E."/>
            <person name="Selkov E."/>
            <person name="Elzer P.H."/>
            <person name="Hagius S."/>
            <person name="O'Callaghan D."/>
            <person name="Letesson J.-J."/>
            <person name="Haselkorn R."/>
            <person name="Kyrpides N.C."/>
            <person name="Overbeek R."/>
        </authorList>
    </citation>
    <scope>NUCLEOTIDE SEQUENCE [LARGE SCALE GENOMIC DNA]</scope>
    <source>
        <strain>ATCC 23456 / CCUG 17765 / NCTC 10094 / 16M</strain>
    </source>
</reference>
<proteinExistence type="inferred from homology"/>
<name>TGT_BRUME</name>
<gene>
    <name evidence="1" type="primary">tgt</name>
    <name type="ordered locus">BMEI0890</name>
</gene>
<evidence type="ECO:0000255" key="1">
    <source>
        <dbReference type="HAMAP-Rule" id="MF_00168"/>
    </source>
</evidence>
<sequence length="377" mass="41466">MTTENFGFKVLARDGAARQGEISMPRGVVRTPAFMPVGTAGTVKAMYMDQVKELGADIILGNTYHLMLRPGAERVARLGGLHEFGGWKGPILTDSGGFQVMSLAQLRKLNEHGVTFRSHIDGKAYEMTPERSIEIQGLLDSDIQMQLDECVALPSPEKNTERAMELSLRWAERCKVAFGDQPGKAMFGIVQGGDIARLRERSAEALKAMDLKGYSVGGLAVGEPQEVMLDMLEVVCPILPTEKPRYLMGVGTPDDILKSVARGIDMFDCVMPTRAGRHGLAFTRFGKVNLRNARHAEDHRPLDPQSDCPASRDYSRAYLHHLVKSGEALGAMLLTWNNLAYYQYLMKGIRAAIADGKFSDFTAETTEGWARGDMPAL</sequence>
<accession>Q8YHB2</accession>
<protein>
    <recommendedName>
        <fullName evidence="1">Queuine tRNA-ribosyltransferase</fullName>
        <ecNumber evidence="1">2.4.2.29</ecNumber>
    </recommendedName>
    <alternativeName>
        <fullName evidence="1">Guanine insertion enzyme</fullName>
    </alternativeName>
    <alternativeName>
        <fullName evidence="1">tRNA-guanine transglycosylase</fullName>
    </alternativeName>
</protein>
<dbReference type="EC" id="2.4.2.29" evidence="1"/>
<dbReference type="EMBL" id="AE008917">
    <property type="protein sequence ID" value="AAL52071.1"/>
    <property type="molecule type" value="Genomic_DNA"/>
</dbReference>
<dbReference type="PIR" id="AD3363">
    <property type="entry name" value="AD3363"/>
</dbReference>
<dbReference type="RefSeq" id="WP_005968547.1">
    <property type="nucleotide sequence ID" value="NZ_CP007763.1"/>
</dbReference>
<dbReference type="SMR" id="Q8YHB2"/>
<dbReference type="GeneID" id="29593705"/>
<dbReference type="KEGG" id="bme:BMEI0890"/>
<dbReference type="KEGG" id="bmel:DK63_531"/>
<dbReference type="PATRIC" id="fig|224914.52.peg.554"/>
<dbReference type="eggNOG" id="COG0343">
    <property type="taxonomic scope" value="Bacteria"/>
</dbReference>
<dbReference type="PhylomeDB" id="Q8YHB2"/>
<dbReference type="UniPathway" id="UPA00392"/>
<dbReference type="Proteomes" id="UP000000419">
    <property type="component" value="Chromosome I"/>
</dbReference>
<dbReference type="GO" id="GO:0005829">
    <property type="term" value="C:cytosol"/>
    <property type="evidence" value="ECO:0007669"/>
    <property type="project" value="TreeGrafter"/>
</dbReference>
<dbReference type="GO" id="GO:0008479">
    <property type="term" value="F:tRNA-guanosine(34) queuine transglycosylase activity"/>
    <property type="evidence" value="ECO:0007669"/>
    <property type="project" value="UniProtKB-UniRule"/>
</dbReference>
<dbReference type="GO" id="GO:0008616">
    <property type="term" value="P:queuosine biosynthetic process"/>
    <property type="evidence" value="ECO:0007669"/>
    <property type="project" value="UniProtKB-UniRule"/>
</dbReference>
<dbReference type="GO" id="GO:0002099">
    <property type="term" value="P:tRNA wobble guanine modification"/>
    <property type="evidence" value="ECO:0007669"/>
    <property type="project" value="TreeGrafter"/>
</dbReference>
<dbReference type="GO" id="GO:0101030">
    <property type="term" value="P:tRNA-guanine transglycosylation"/>
    <property type="evidence" value="ECO:0007669"/>
    <property type="project" value="InterPro"/>
</dbReference>
<dbReference type="FunFam" id="3.20.20.105:FF:000001">
    <property type="entry name" value="Queuine tRNA-ribosyltransferase"/>
    <property type="match status" value="1"/>
</dbReference>
<dbReference type="Gene3D" id="3.20.20.105">
    <property type="entry name" value="Queuine tRNA-ribosyltransferase-like"/>
    <property type="match status" value="1"/>
</dbReference>
<dbReference type="HAMAP" id="MF_00168">
    <property type="entry name" value="Q_tRNA_Tgt"/>
    <property type="match status" value="1"/>
</dbReference>
<dbReference type="InterPro" id="IPR050076">
    <property type="entry name" value="ArchSynthase1/Queuine_TRR"/>
</dbReference>
<dbReference type="InterPro" id="IPR004803">
    <property type="entry name" value="TGT"/>
</dbReference>
<dbReference type="InterPro" id="IPR036511">
    <property type="entry name" value="TGT-like_sf"/>
</dbReference>
<dbReference type="InterPro" id="IPR002616">
    <property type="entry name" value="tRNA_ribo_trans-like"/>
</dbReference>
<dbReference type="NCBIfam" id="TIGR00430">
    <property type="entry name" value="Q_tRNA_tgt"/>
    <property type="match status" value="1"/>
</dbReference>
<dbReference type="NCBIfam" id="TIGR00449">
    <property type="entry name" value="tgt_general"/>
    <property type="match status" value="1"/>
</dbReference>
<dbReference type="PANTHER" id="PTHR46499">
    <property type="entry name" value="QUEUINE TRNA-RIBOSYLTRANSFERASE"/>
    <property type="match status" value="1"/>
</dbReference>
<dbReference type="PANTHER" id="PTHR46499:SF1">
    <property type="entry name" value="QUEUINE TRNA-RIBOSYLTRANSFERASE"/>
    <property type="match status" value="1"/>
</dbReference>
<dbReference type="Pfam" id="PF01702">
    <property type="entry name" value="TGT"/>
    <property type="match status" value="1"/>
</dbReference>
<dbReference type="SUPFAM" id="SSF51713">
    <property type="entry name" value="tRNA-guanine transglycosylase"/>
    <property type="match status" value="1"/>
</dbReference>
<feature type="chain" id="PRO_0000135455" description="Queuine tRNA-ribosyltransferase">
    <location>
        <begin position="1"/>
        <end position="377"/>
    </location>
</feature>
<feature type="region of interest" description="RNA binding" evidence="1">
    <location>
        <begin position="249"/>
        <end position="255"/>
    </location>
</feature>
<feature type="region of interest" description="RNA binding; important for wobble base 34 recognition" evidence="1">
    <location>
        <begin position="273"/>
        <end position="277"/>
    </location>
</feature>
<feature type="active site" description="Proton acceptor" evidence="1">
    <location>
        <position position="94"/>
    </location>
</feature>
<feature type="active site" description="Nucleophile" evidence="1">
    <location>
        <position position="268"/>
    </location>
</feature>
<feature type="binding site" evidence="1">
    <location>
        <begin position="94"/>
        <end position="98"/>
    </location>
    <ligand>
        <name>substrate</name>
    </ligand>
</feature>
<feature type="binding site" evidence="1">
    <location>
        <position position="148"/>
    </location>
    <ligand>
        <name>substrate</name>
    </ligand>
</feature>
<feature type="binding site" evidence="1">
    <location>
        <position position="191"/>
    </location>
    <ligand>
        <name>substrate</name>
    </ligand>
</feature>
<feature type="binding site" evidence="1">
    <location>
        <position position="218"/>
    </location>
    <ligand>
        <name>substrate</name>
    </ligand>
</feature>
<comment type="function">
    <text evidence="1">Catalyzes the base-exchange of a guanine (G) residue with the queuine precursor 7-aminomethyl-7-deazaguanine (PreQ1) at position 34 (anticodon wobble position) in tRNAs with GU(N) anticodons (tRNA-Asp, -Asn, -His and -Tyr). Catalysis occurs through a double-displacement mechanism. The nucleophile active site attacks the C1' of nucleotide 34 to detach the guanine base from the RNA, forming a covalent enzyme-RNA intermediate. The proton acceptor active site deprotonates the incoming PreQ1, allowing a nucleophilic attack on the C1' of the ribose to form the product. After dissociation, two additional enzymatic reactions on the tRNA convert PreQ1 to queuine (Q), resulting in the hypermodified nucleoside queuosine (7-(((4,5-cis-dihydroxy-2-cyclopenten-1-yl)amino)methyl)-7-deazaguanosine).</text>
</comment>
<comment type="catalytic activity">
    <reaction evidence="1">
        <text>7-aminomethyl-7-carbaguanine + guanosine(34) in tRNA = 7-aminomethyl-7-carbaguanosine(34) in tRNA + guanine</text>
        <dbReference type="Rhea" id="RHEA:24104"/>
        <dbReference type="Rhea" id="RHEA-COMP:10341"/>
        <dbReference type="Rhea" id="RHEA-COMP:10342"/>
        <dbReference type="ChEBI" id="CHEBI:16235"/>
        <dbReference type="ChEBI" id="CHEBI:58703"/>
        <dbReference type="ChEBI" id="CHEBI:74269"/>
        <dbReference type="ChEBI" id="CHEBI:82833"/>
        <dbReference type="EC" id="2.4.2.29"/>
    </reaction>
</comment>
<comment type="pathway">
    <text evidence="1">tRNA modification; tRNA-queuosine biosynthesis.</text>
</comment>
<comment type="subunit">
    <text evidence="1">Homodimer. Within each dimer, one monomer is responsible for RNA recognition and catalysis, while the other monomer binds to the replacement base PreQ1.</text>
</comment>
<comment type="similarity">
    <text evidence="1">Belongs to the queuine tRNA-ribosyltransferase family.</text>
</comment>
<keyword id="KW-0328">Glycosyltransferase</keyword>
<keyword id="KW-0671">Queuosine biosynthesis</keyword>
<keyword id="KW-0808">Transferase</keyword>
<keyword id="KW-0819">tRNA processing</keyword>
<organism>
    <name type="scientific">Brucella melitensis biotype 1 (strain ATCC 23456 / CCUG 17765 / NCTC 10094 / 16M)</name>
    <dbReference type="NCBI Taxonomy" id="224914"/>
    <lineage>
        <taxon>Bacteria</taxon>
        <taxon>Pseudomonadati</taxon>
        <taxon>Pseudomonadota</taxon>
        <taxon>Alphaproteobacteria</taxon>
        <taxon>Hyphomicrobiales</taxon>
        <taxon>Brucellaceae</taxon>
        <taxon>Brucella/Ochrobactrum group</taxon>
        <taxon>Brucella</taxon>
    </lineage>
</organism>